<evidence type="ECO:0000255" key="1">
    <source>
        <dbReference type="HAMAP-Rule" id="MF_01183"/>
    </source>
</evidence>
<organism>
    <name type="scientific">Yersinia pestis</name>
    <dbReference type="NCBI Taxonomy" id="632"/>
    <lineage>
        <taxon>Bacteria</taxon>
        <taxon>Pseudomonadati</taxon>
        <taxon>Pseudomonadota</taxon>
        <taxon>Gammaproteobacteria</taxon>
        <taxon>Enterobacterales</taxon>
        <taxon>Yersiniaceae</taxon>
        <taxon>Yersinia</taxon>
    </lineage>
</organism>
<keyword id="KW-0143">Chaperone</keyword>
<keyword id="KW-0413">Isomerase</keyword>
<keyword id="KW-0574">Periplasm</keyword>
<keyword id="KW-1185">Reference proteome</keyword>
<keyword id="KW-0677">Repeat</keyword>
<keyword id="KW-0697">Rotamase</keyword>
<keyword id="KW-0732">Signal</keyword>
<gene>
    <name evidence="1" type="primary">surA</name>
    <name type="ordered locus">YPO0494</name>
    <name type="ordered locus">y3681</name>
    <name type="ordered locus">YP_3685</name>
</gene>
<name>SURA_YERPE</name>
<feature type="signal peptide" evidence="1">
    <location>
        <begin position="1"/>
        <end position="20"/>
    </location>
</feature>
<feature type="chain" id="PRO_0000270055" description="Chaperone SurA">
    <location>
        <begin position="21"/>
        <end position="434"/>
    </location>
</feature>
<feature type="domain" description="PpiC 1" evidence="1">
    <location>
        <begin position="171"/>
        <end position="272"/>
    </location>
</feature>
<feature type="domain" description="PpiC 2" evidence="1">
    <location>
        <begin position="282"/>
        <end position="382"/>
    </location>
</feature>
<reference key="1">
    <citation type="journal article" date="2002" name="J. Bacteriol.">
        <title>Genome sequence of Yersinia pestis KIM.</title>
        <authorList>
            <person name="Deng W."/>
            <person name="Burland V."/>
            <person name="Plunkett G. III"/>
            <person name="Boutin A."/>
            <person name="Mayhew G.F."/>
            <person name="Liss P."/>
            <person name="Perna N.T."/>
            <person name="Rose D.J."/>
            <person name="Mau B."/>
            <person name="Zhou S."/>
            <person name="Schwartz D.C."/>
            <person name="Fetherston J.D."/>
            <person name="Lindler L.E."/>
            <person name="Brubaker R.R."/>
            <person name="Plano G.V."/>
            <person name="Straley S.C."/>
            <person name="McDonough K.A."/>
            <person name="Nilles M.L."/>
            <person name="Matson J.S."/>
            <person name="Blattner F.R."/>
            <person name="Perry R.D."/>
        </authorList>
    </citation>
    <scope>NUCLEOTIDE SEQUENCE [LARGE SCALE GENOMIC DNA]</scope>
    <source>
        <strain>KIM10+ / Biovar Mediaevalis</strain>
    </source>
</reference>
<reference key="2">
    <citation type="journal article" date="2001" name="Nature">
        <title>Genome sequence of Yersinia pestis, the causative agent of plague.</title>
        <authorList>
            <person name="Parkhill J."/>
            <person name="Wren B.W."/>
            <person name="Thomson N.R."/>
            <person name="Titball R.W."/>
            <person name="Holden M.T.G."/>
            <person name="Prentice M.B."/>
            <person name="Sebaihia M."/>
            <person name="James K.D."/>
            <person name="Churcher C.M."/>
            <person name="Mungall K.L."/>
            <person name="Baker S."/>
            <person name="Basham D."/>
            <person name="Bentley S.D."/>
            <person name="Brooks K."/>
            <person name="Cerdeno-Tarraga A.-M."/>
            <person name="Chillingworth T."/>
            <person name="Cronin A."/>
            <person name="Davies R.M."/>
            <person name="Davis P."/>
            <person name="Dougan G."/>
            <person name="Feltwell T."/>
            <person name="Hamlin N."/>
            <person name="Holroyd S."/>
            <person name="Jagels K."/>
            <person name="Karlyshev A.V."/>
            <person name="Leather S."/>
            <person name="Moule S."/>
            <person name="Oyston P.C.F."/>
            <person name="Quail M.A."/>
            <person name="Rutherford K.M."/>
            <person name="Simmonds M."/>
            <person name="Skelton J."/>
            <person name="Stevens K."/>
            <person name="Whitehead S."/>
            <person name="Barrell B.G."/>
        </authorList>
    </citation>
    <scope>NUCLEOTIDE SEQUENCE [LARGE SCALE GENOMIC DNA]</scope>
    <source>
        <strain>CO-92 / Biovar Orientalis</strain>
    </source>
</reference>
<reference key="3">
    <citation type="journal article" date="2004" name="DNA Res.">
        <title>Complete genome sequence of Yersinia pestis strain 91001, an isolate avirulent to humans.</title>
        <authorList>
            <person name="Song Y."/>
            <person name="Tong Z."/>
            <person name="Wang J."/>
            <person name="Wang L."/>
            <person name="Guo Z."/>
            <person name="Han Y."/>
            <person name="Zhang J."/>
            <person name="Pei D."/>
            <person name="Zhou D."/>
            <person name="Qin H."/>
            <person name="Pang X."/>
            <person name="Han Y."/>
            <person name="Zhai J."/>
            <person name="Li M."/>
            <person name="Cui B."/>
            <person name="Qi Z."/>
            <person name="Jin L."/>
            <person name="Dai R."/>
            <person name="Chen F."/>
            <person name="Li S."/>
            <person name="Ye C."/>
            <person name="Du Z."/>
            <person name="Lin W."/>
            <person name="Wang J."/>
            <person name="Yu J."/>
            <person name="Yang H."/>
            <person name="Wang J."/>
            <person name="Huang P."/>
            <person name="Yang R."/>
        </authorList>
    </citation>
    <scope>NUCLEOTIDE SEQUENCE [LARGE SCALE GENOMIC DNA]</scope>
    <source>
        <strain>91001 / Biovar Mediaevalis</strain>
    </source>
</reference>
<protein>
    <recommendedName>
        <fullName evidence="1">Chaperone SurA</fullName>
    </recommendedName>
    <alternativeName>
        <fullName evidence="1">Peptidyl-prolyl cis-trans isomerase SurA</fullName>
        <shortName evidence="1">PPIase SurA</shortName>
        <ecNumber evidence="1">5.2.1.8</ecNumber>
    </alternativeName>
    <alternativeName>
        <fullName evidence="1">Rotamase SurA</fullName>
    </alternativeName>
</protein>
<accession>Q7CG87</accession>
<accession>Q74Q29</accession>
<dbReference type="EC" id="5.2.1.8" evidence="1"/>
<dbReference type="EMBL" id="AE009952">
    <property type="protein sequence ID" value="AAM87229.1"/>
    <property type="molecule type" value="Genomic_DNA"/>
</dbReference>
<dbReference type="EMBL" id="AL590842">
    <property type="protein sequence ID" value="CAL19174.1"/>
    <property type="molecule type" value="Genomic_DNA"/>
</dbReference>
<dbReference type="EMBL" id="AE017042">
    <property type="protein sequence ID" value="AAS63833.1"/>
    <property type="molecule type" value="Genomic_DNA"/>
</dbReference>
<dbReference type="PIR" id="AD0061">
    <property type="entry name" value="AD0061"/>
</dbReference>
<dbReference type="RefSeq" id="WP_002210488.1">
    <property type="nucleotide sequence ID" value="NZ_WUCM01000024.1"/>
</dbReference>
<dbReference type="RefSeq" id="YP_002345567.1">
    <property type="nucleotide sequence ID" value="NC_003143.1"/>
</dbReference>
<dbReference type="SMR" id="Q7CG87"/>
<dbReference type="IntAct" id="Q7CG87">
    <property type="interactions" value="1"/>
</dbReference>
<dbReference type="STRING" id="214092.YPO0494"/>
<dbReference type="PaxDb" id="214092-YPO0494"/>
<dbReference type="DNASU" id="1148628"/>
<dbReference type="EnsemblBacteria" id="AAS63833">
    <property type="protein sequence ID" value="AAS63833"/>
    <property type="gene ID" value="YP_3685"/>
</dbReference>
<dbReference type="GeneID" id="57974116"/>
<dbReference type="KEGG" id="ype:YPO0494"/>
<dbReference type="KEGG" id="ypk:y3681"/>
<dbReference type="KEGG" id="ypm:YP_3685"/>
<dbReference type="PATRIC" id="fig|214092.21.peg.744"/>
<dbReference type="eggNOG" id="COG0760">
    <property type="taxonomic scope" value="Bacteria"/>
</dbReference>
<dbReference type="HOGENOM" id="CLU_034646_11_0_6"/>
<dbReference type="OMA" id="HGWHIVQ"/>
<dbReference type="OrthoDB" id="14196at2"/>
<dbReference type="Proteomes" id="UP000000815">
    <property type="component" value="Chromosome"/>
</dbReference>
<dbReference type="Proteomes" id="UP000001019">
    <property type="component" value="Chromosome"/>
</dbReference>
<dbReference type="Proteomes" id="UP000002490">
    <property type="component" value="Chromosome"/>
</dbReference>
<dbReference type="GO" id="GO:0030288">
    <property type="term" value="C:outer membrane-bounded periplasmic space"/>
    <property type="evidence" value="ECO:0000318"/>
    <property type="project" value="GO_Central"/>
</dbReference>
<dbReference type="GO" id="GO:0042277">
    <property type="term" value="F:peptide binding"/>
    <property type="evidence" value="ECO:0007669"/>
    <property type="project" value="InterPro"/>
</dbReference>
<dbReference type="GO" id="GO:0003755">
    <property type="term" value="F:peptidyl-prolyl cis-trans isomerase activity"/>
    <property type="evidence" value="ECO:0000318"/>
    <property type="project" value="GO_Central"/>
</dbReference>
<dbReference type="GO" id="GO:0051082">
    <property type="term" value="F:unfolded protein binding"/>
    <property type="evidence" value="ECO:0000318"/>
    <property type="project" value="GO_Central"/>
</dbReference>
<dbReference type="GO" id="GO:0061077">
    <property type="term" value="P:chaperone-mediated protein folding"/>
    <property type="evidence" value="ECO:0000318"/>
    <property type="project" value="GO_Central"/>
</dbReference>
<dbReference type="GO" id="GO:0043165">
    <property type="term" value="P:Gram-negative-bacterium-type cell outer membrane assembly"/>
    <property type="evidence" value="ECO:0007669"/>
    <property type="project" value="InterPro"/>
</dbReference>
<dbReference type="GO" id="GO:0050821">
    <property type="term" value="P:protein stabilization"/>
    <property type="evidence" value="ECO:0007669"/>
    <property type="project" value="InterPro"/>
</dbReference>
<dbReference type="Gene3D" id="3.10.50.40">
    <property type="match status" value="2"/>
</dbReference>
<dbReference type="Gene3D" id="1.10.4030.10">
    <property type="entry name" value="Porin chaperone SurA, peptide-binding domain"/>
    <property type="match status" value="2"/>
</dbReference>
<dbReference type="HAMAP" id="MF_01183">
    <property type="entry name" value="Chaperone_SurA"/>
    <property type="match status" value="1"/>
</dbReference>
<dbReference type="InterPro" id="IPR050280">
    <property type="entry name" value="OMP_Chaperone_SurA"/>
</dbReference>
<dbReference type="InterPro" id="IPR046357">
    <property type="entry name" value="PPIase_dom_sf"/>
</dbReference>
<dbReference type="InterPro" id="IPR000297">
    <property type="entry name" value="PPIase_PpiC"/>
</dbReference>
<dbReference type="InterPro" id="IPR023034">
    <property type="entry name" value="PPIase_SurA"/>
</dbReference>
<dbReference type="InterPro" id="IPR015391">
    <property type="entry name" value="SurA_N"/>
</dbReference>
<dbReference type="InterPro" id="IPR027304">
    <property type="entry name" value="Trigger_fact/SurA_dom_sf"/>
</dbReference>
<dbReference type="NCBIfam" id="NF008038">
    <property type="entry name" value="PRK10770.1"/>
    <property type="match status" value="1"/>
</dbReference>
<dbReference type="PANTHER" id="PTHR47637">
    <property type="entry name" value="CHAPERONE SURA"/>
    <property type="match status" value="1"/>
</dbReference>
<dbReference type="PANTHER" id="PTHR47637:SF1">
    <property type="entry name" value="CHAPERONE SURA"/>
    <property type="match status" value="1"/>
</dbReference>
<dbReference type="Pfam" id="PF00639">
    <property type="entry name" value="Rotamase"/>
    <property type="match status" value="1"/>
</dbReference>
<dbReference type="Pfam" id="PF13616">
    <property type="entry name" value="Rotamase_3"/>
    <property type="match status" value="1"/>
</dbReference>
<dbReference type="Pfam" id="PF09312">
    <property type="entry name" value="SurA_N"/>
    <property type="match status" value="1"/>
</dbReference>
<dbReference type="SUPFAM" id="SSF54534">
    <property type="entry name" value="FKBP-like"/>
    <property type="match status" value="2"/>
</dbReference>
<dbReference type="SUPFAM" id="SSF109998">
    <property type="entry name" value="Triger factor/SurA peptide-binding domain-like"/>
    <property type="match status" value="1"/>
</dbReference>
<dbReference type="PROSITE" id="PS01096">
    <property type="entry name" value="PPIC_PPIASE_1"/>
    <property type="match status" value="1"/>
</dbReference>
<dbReference type="PROSITE" id="PS50198">
    <property type="entry name" value="PPIC_PPIASE_2"/>
    <property type="match status" value="2"/>
</dbReference>
<comment type="function">
    <text evidence="1">Chaperone involved in the correct folding and assembly of outer membrane proteins. Recognizes specific patterns of aromatic residues and the orientation of their side chains, which are found more frequently in integral outer membrane proteins. May act in both early periplasmic and late outer membrane-associated steps of protein maturation.</text>
</comment>
<comment type="catalytic activity">
    <reaction evidence="1">
        <text>[protein]-peptidylproline (omega=180) = [protein]-peptidylproline (omega=0)</text>
        <dbReference type="Rhea" id="RHEA:16237"/>
        <dbReference type="Rhea" id="RHEA-COMP:10747"/>
        <dbReference type="Rhea" id="RHEA-COMP:10748"/>
        <dbReference type="ChEBI" id="CHEBI:83833"/>
        <dbReference type="ChEBI" id="CHEBI:83834"/>
        <dbReference type="EC" id="5.2.1.8"/>
    </reaction>
</comment>
<comment type="subcellular location">
    <subcellularLocation>
        <location evidence="1">Periplasm</location>
    </subcellularLocation>
    <text evidence="1">Is capable of associating with the outer membrane.</text>
</comment>
<comment type="domain">
    <text evidence="1">The PPIase activity resides only in the second parvulin domain. The N-terminal region and the C-terminal tail are necessary and sufficient for the chaperone activity of SurA. The PPIase activity is dispensable for SurA to function as a chaperone. The N-terminal region and the C-terminal tail are also required for porin recognition.</text>
</comment>
<proteinExistence type="inferred from homology"/>
<sequence length="434" mass="47733">MKNWRTLILGLVICANTAFAAPQEVDKVAAVVDNGVVLQSDIDGLLQSVKMNAQQSGQQVPDDSTLRHQILERLIMDNIQLQMAKKMGITITDQALDKAIADIAAQNRMTLAQMRSRLAADGLSYDTYREQIRKEMLTSEVRNNEVRRRITILPQEVESLAKQMGNQVSGDTELNLSHILIPLPENPTQQQVDQAEDLANKLVADIKGGADFGKLAIANSADSQALKGGQMGWGKLQELPSLFAERLQSAHKGEIVGPIRSGVGFHILKVNDMRGADQTISVTEVNARHILLKPSPMMTDEQARAKLEAAAAEIKSGKTSFATIAKEISQDPGSAMQGGELGWASPDIYDPAFRDALMKLKKGEISAPVHSSFGWHLIQLVDTRQVDKTDAAQKERAYRMLFNRKFAEEAQTWMQEQRAAAYVKILDGSNAQPQ</sequence>